<name>MURE_LIGS1</name>
<reference key="1">
    <citation type="journal article" date="2006" name="Proc. Natl. Acad. Sci. U.S.A.">
        <title>Multireplicon genome architecture of Lactobacillus salivarius.</title>
        <authorList>
            <person name="Claesson M.J."/>
            <person name="Li Y."/>
            <person name="Leahy S."/>
            <person name="Canchaya C."/>
            <person name="van Pijkeren J.P."/>
            <person name="Cerdeno-Tarraga A.M."/>
            <person name="Parkhill J."/>
            <person name="Flynn S."/>
            <person name="O'Sullivan G.C."/>
            <person name="Collins J.K."/>
            <person name="Higgins D."/>
            <person name="Shanahan F."/>
            <person name="Fitzgerald G.F."/>
            <person name="van Sinderen D."/>
            <person name="O'Toole P.W."/>
        </authorList>
    </citation>
    <scope>NUCLEOTIDE SEQUENCE [LARGE SCALE GENOMIC DNA]</scope>
    <source>
        <strain>UCC118</strain>
    </source>
</reference>
<feature type="chain" id="PRO_1000012367" description="UDP-N-acetylmuramyl-tripeptide synthetase">
    <location>
        <begin position="1"/>
        <end position="510"/>
    </location>
</feature>
<feature type="binding site" evidence="1">
    <location>
        <position position="36"/>
    </location>
    <ligand>
        <name>UDP-N-acetyl-alpha-D-muramoyl-L-alanyl-D-glutamate</name>
        <dbReference type="ChEBI" id="CHEBI:83900"/>
    </ligand>
</feature>
<feature type="binding site" evidence="1">
    <location>
        <begin position="113"/>
        <end position="119"/>
    </location>
    <ligand>
        <name>ATP</name>
        <dbReference type="ChEBI" id="CHEBI:30616"/>
    </ligand>
</feature>
<feature type="binding site" evidence="1">
    <location>
        <begin position="159"/>
        <end position="160"/>
    </location>
    <ligand>
        <name>UDP-N-acetyl-alpha-D-muramoyl-L-alanyl-D-glutamate</name>
        <dbReference type="ChEBI" id="CHEBI:83900"/>
    </ligand>
</feature>
<feature type="binding site" evidence="1">
    <location>
        <position position="186"/>
    </location>
    <ligand>
        <name>UDP-N-acetyl-alpha-D-muramoyl-L-alanyl-D-glutamate</name>
        <dbReference type="ChEBI" id="CHEBI:83900"/>
    </ligand>
</feature>
<feature type="binding site" evidence="1">
    <location>
        <position position="194"/>
    </location>
    <ligand>
        <name>UDP-N-acetyl-alpha-D-muramoyl-L-alanyl-D-glutamate</name>
        <dbReference type="ChEBI" id="CHEBI:83900"/>
    </ligand>
</feature>
<feature type="modified residue" description="N6-carboxylysine" evidence="1">
    <location>
        <position position="228"/>
    </location>
</feature>
<gene>
    <name evidence="1" type="primary">murE</name>
    <name type="ordered locus">LSL_0016</name>
</gene>
<keyword id="KW-0067">ATP-binding</keyword>
<keyword id="KW-0131">Cell cycle</keyword>
<keyword id="KW-0132">Cell division</keyword>
<keyword id="KW-0133">Cell shape</keyword>
<keyword id="KW-0961">Cell wall biogenesis/degradation</keyword>
<keyword id="KW-0963">Cytoplasm</keyword>
<keyword id="KW-0436">Ligase</keyword>
<keyword id="KW-0547">Nucleotide-binding</keyword>
<keyword id="KW-0573">Peptidoglycan synthesis</keyword>
<keyword id="KW-1185">Reference proteome</keyword>
<organism>
    <name type="scientific">Ligilactobacillus salivarius (strain UCC118)</name>
    <name type="common">Lactobacillus salivarius</name>
    <dbReference type="NCBI Taxonomy" id="362948"/>
    <lineage>
        <taxon>Bacteria</taxon>
        <taxon>Bacillati</taxon>
        <taxon>Bacillota</taxon>
        <taxon>Bacilli</taxon>
        <taxon>Lactobacillales</taxon>
        <taxon>Lactobacillaceae</taxon>
        <taxon>Ligilactobacillus</taxon>
    </lineage>
</organism>
<dbReference type="EC" id="6.3.2.-" evidence="1"/>
<dbReference type="EMBL" id="CP000233">
    <property type="protein sequence ID" value="ABD98839.1"/>
    <property type="molecule type" value="Genomic_DNA"/>
</dbReference>
<dbReference type="RefSeq" id="WP_011475458.1">
    <property type="nucleotide sequence ID" value="NC_007929.1"/>
</dbReference>
<dbReference type="RefSeq" id="YP_534922.1">
    <property type="nucleotide sequence ID" value="NC_007929.1"/>
</dbReference>
<dbReference type="SMR" id="Q1WVQ8"/>
<dbReference type="STRING" id="362948.LSL_0016"/>
<dbReference type="KEGG" id="lsl:LSL_0016"/>
<dbReference type="PATRIC" id="fig|362948.14.peg.90"/>
<dbReference type="HOGENOM" id="CLU_022291_4_2_9"/>
<dbReference type="OrthoDB" id="9800958at2"/>
<dbReference type="UniPathway" id="UPA00219"/>
<dbReference type="Proteomes" id="UP000006559">
    <property type="component" value="Chromosome"/>
</dbReference>
<dbReference type="GO" id="GO:0005737">
    <property type="term" value="C:cytoplasm"/>
    <property type="evidence" value="ECO:0007669"/>
    <property type="project" value="UniProtKB-SubCell"/>
</dbReference>
<dbReference type="GO" id="GO:0016881">
    <property type="term" value="F:acid-amino acid ligase activity"/>
    <property type="evidence" value="ECO:0007669"/>
    <property type="project" value="UniProtKB-UniRule"/>
</dbReference>
<dbReference type="GO" id="GO:0005524">
    <property type="term" value="F:ATP binding"/>
    <property type="evidence" value="ECO:0007669"/>
    <property type="project" value="UniProtKB-UniRule"/>
</dbReference>
<dbReference type="GO" id="GO:0000287">
    <property type="term" value="F:magnesium ion binding"/>
    <property type="evidence" value="ECO:0007669"/>
    <property type="project" value="UniProtKB-UniRule"/>
</dbReference>
<dbReference type="GO" id="GO:0051301">
    <property type="term" value="P:cell division"/>
    <property type="evidence" value="ECO:0007669"/>
    <property type="project" value="UniProtKB-KW"/>
</dbReference>
<dbReference type="GO" id="GO:0071555">
    <property type="term" value="P:cell wall organization"/>
    <property type="evidence" value="ECO:0007669"/>
    <property type="project" value="UniProtKB-KW"/>
</dbReference>
<dbReference type="GO" id="GO:0009252">
    <property type="term" value="P:peptidoglycan biosynthetic process"/>
    <property type="evidence" value="ECO:0007669"/>
    <property type="project" value="UniProtKB-UniRule"/>
</dbReference>
<dbReference type="GO" id="GO:0008360">
    <property type="term" value="P:regulation of cell shape"/>
    <property type="evidence" value="ECO:0007669"/>
    <property type="project" value="UniProtKB-KW"/>
</dbReference>
<dbReference type="Gene3D" id="3.90.190.20">
    <property type="entry name" value="Mur ligase, C-terminal domain"/>
    <property type="match status" value="1"/>
</dbReference>
<dbReference type="Gene3D" id="3.40.1190.10">
    <property type="entry name" value="Mur-like, catalytic domain"/>
    <property type="match status" value="1"/>
</dbReference>
<dbReference type="Gene3D" id="3.40.1390.10">
    <property type="entry name" value="MurE/MurF, N-terminal domain"/>
    <property type="match status" value="1"/>
</dbReference>
<dbReference type="HAMAP" id="MF_00208">
    <property type="entry name" value="MurE"/>
    <property type="match status" value="1"/>
</dbReference>
<dbReference type="InterPro" id="IPR036565">
    <property type="entry name" value="Mur-like_cat_sf"/>
</dbReference>
<dbReference type="InterPro" id="IPR004101">
    <property type="entry name" value="Mur_ligase_C"/>
</dbReference>
<dbReference type="InterPro" id="IPR036615">
    <property type="entry name" value="Mur_ligase_C_dom_sf"/>
</dbReference>
<dbReference type="InterPro" id="IPR013221">
    <property type="entry name" value="Mur_ligase_cen"/>
</dbReference>
<dbReference type="InterPro" id="IPR035911">
    <property type="entry name" value="MurE/MurF_N"/>
</dbReference>
<dbReference type="InterPro" id="IPR005761">
    <property type="entry name" value="UDP-N-AcMur-Glu-dNH2Pim_ligase"/>
</dbReference>
<dbReference type="NCBIfam" id="TIGR01085">
    <property type="entry name" value="murE"/>
    <property type="match status" value="1"/>
</dbReference>
<dbReference type="NCBIfam" id="NF001130">
    <property type="entry name" value="PRK00139.2-4"/>
    <property type="match status" value="1"/>
</dbReference>
<dbReference type="PANTHER" id="PTHR23135">
    <property type="entry name" value="MUR LIGASE FAMILY MEMBER"/>
    <property type="match status" value="1"/>
</dbReference>
<dbReference type="PANTHER" id="PTHR23135:SF4">
    <property type="entry name" value="UDP-N-ACETYLMURAMOYL-L-ALANYL-D-GLUTAMATE--2,6-DIAMINOPIMELATE LIGASE MURE HOMOLOG, CHLOROPLASTIC"/>
    <property type="match status" value="1"/>
</dbReference>
<dbReference type="Pfam" id="PF02875">
    <property type="entry name" value="Mur_ligase_C"/>
    <property type="match status" value="1"/>
</dbReference>
<dbReference type="Pfam" id="PF08245">
    <property type="entry name" value="Mur_ligase_M"/>
    <property type="match status" value="1"/>
</dbReference>
<dbReference type="SUPFAM" id="SSF53623">
    <property type="entry name" value="MurD-like peptide ligases, catalytic domain"/>
    <property type="match status" value="1"/>
</dbReference>
<dbReference type="SUPFAM" id="SSF53244">
    <property type="entry name" value="MurD-like peptide ligases, peptide-binding domain"/>
    <property type="match status" value="1"/>
</dbReference>
<dbReference type="SUPFAM" id="SSF63418">
    <property type="entry name" value="MurE/MurF N-terminal domain"/>
    <property type="match status" value="1"/>
</dbReference>
<comment type="function">
    <text evidence="1">Catalyzes the addition of an amino acid to the nucleotide precursor UDP-N-acetylmuramoyl-L-alanyl-D-glutamate (UMAG) in the biosynthesis of bacterial cell-wall peptidoglycan.</text>
</comment>
<comment type="pathway">
    <text evidence="1">Cell wall biogenesis; peptidoglycan biosynthesis.</text>
</comment>
<comment type="subcellular location">
    <subcellularLocation>
        <location evidence="1">Cytoplasm</location>
    </subcellularLocation>
</comment>
<comment type="PTM">
    <text evidence="1">Carboxylation is probably crucial for Mg(2+) binding and, consequently, for the gamma-phosphate positioning of ATP.</text>
</comment>
<comment type="similarity">
    <text evidence="1">Belongs to the MurCDEF family. MurE subfamily.</text>
</comment>
<accession>Q1WVQ8</accession>
<sequence length="510" mass="56643">MALEITPALSLLDEHHLLKEVVNEQKLTFENVTYDSRKVSDNTLFFCKGNFKPSYLTSALEKGATAYVSEQKYAEGMDATGIIVTNVQKAMALLGAAFYGFPQNELFIIAYTGTKGKTTSAYFAEHILAKATDKKVALFSTIDRVLGNEPDQRFKSDLTTPESLDLFHDMRAAVNNGMTHLVMEVSSQAYKKNRVYGLTFDVGVFLNISPDHIGRNEHPTFDDYLHCKEQLLVNSKRCVINGETAYLRDVYYTAKATTEPEDIYVFARKGAQISDNIPVDIEYQNDFEDLHKSVIEVKGLSDKAQTLHVDGKYELSVPGDYNEGNATSAIIATLLAGAKGEDARKTLDRVHIPGRMEIIKTKNNGTIYVDYAHNYASLKALFAFLKQQTHAGRVIAVLGSPGDKGISRRPGFGKAVSEEVDHVILTTDDPGFEDPMKIAQEIDSYINHDNVKVEFELDREIAIEKAIKMSTNNDIVVLAGKGEDPYQKIKGVDVPYPSDVNVAKKIVEEL</sequence>
<protein>
    <recommendedName>
        <fullName evidence="1">UDP-N-acetylmuramyl-tripeptide synthetase</fullName>
        <ecNumber evidence="1">6.3.2.-</ecNumber>
    </recommendedName>
    <alternativeName>
        <fullName evidence="1">UDP-MurNAc-tripeptide synthetase</fullName>
    </alternativeName>
</protein>
<proteinExistence type="inferred from homology"/>
<evidence type="ECO:0000255" key="1">
    <source>
        <dbReference type="HAMAP-Rule" id="MF_00208"/>
    </source>
</evidence>